<feature type="chain" id="PRO_0000191609" description="Protamine-2">
    <location>
        <begin position="1"/>
        <end position="103"/>
    </location>
</feature>
<feature type="region of interest" description="Disordered" evidence="3">
    <location>
        <begin position="1"/>
        <end position="103"/>
    </location>
</feature>
<feature type="compositionally biased region" description="Basic and acidic residues" evidence="3">
    <location>
        <begin position="8"/>
        <end position="17"/>
    </location>
</feature>
<feature type="compositionally biased region" description="Low complexity" evidence="3">
    <location>
        <begin position="23"/>
        <end position="35"/>
    </location>
</feature>
<feature type="compositionally biased region" description="Basic and acidic residues" evidence="3">
    <location>
        <begin position="39"/>
        <end position="48"/>
    </location>
</feature>
<feature type="compositionally biased region" description="Basic residues" evidence="3">
    <location>
        <begin position="51"/>
        <end position="103"/>
    </location>
</feature>
<feature type="modified residue" description="Phosphoserine" evidence="2">
    <location>
        <position position="8"/>
    </location>
</feature>
<feature type="modified residue" description="Phosphoserine" evidence="2">
    <location>
        <position position="10"/>
    </location>
</feature>
<feature type="modified residue" description="Phosphoserine" evidence="2">
    <location>
        <position position="37"/>
    </location>
</feature>
<proteinExistence type="evidence at transcript level"/>
<name>PRM2_SEMEN</name>
<sequence length="103" mass="13304">MVRYRMRSLSERPHEVHGQQVYGQEQGHNGQEEQGLSPEHVEVYERTHQGYSHHRRRRCSRRRLYRIHRRRHRSCRRRRRRSCRHRRRHRRGCRTRRRRCRRY</sequence>
<protein>
    <recommendedName>
        <fullName>Protamine-2</fullName>
    </recommendedName>
    <alternativeName>
        <fullName>Sperm histone P2</fullName>
    </alternativeName>
    <alternativeName>
        <fullName>Sperm protamine P2</fullName>
    </alternativeName>
</protein>
<accession>Q9GKM1</accession>
<dbReference type="EMBL" id="AF195643">
    <property type="protein sequence ID" value="AAG42202.1"/>
    <property type="molecule type" value="Genomic_DNA"/>
</dbReference>
<dbReference type="EMBL" id="AF195642">
    <property type="protein sequence ID" value="AAG42202.1"/>
    <property type="status" value="JOINED"/>
    <property type="molecule type" value="Genomic_DNA"/>
</dbReference>
<dbReference type="GO" id="GO:0000786">
    <property type="term" value="C:nucleosome"/>
    <property type="evidence" value="ECO:0007669"/>
    <property type="project" value="UniProtKB-KW"/>
</dbReference>
<dbReference type="GO" id="GO:0005634">
    <property type="term" value="C:nucleus"/>
    <property type="evidence" value="ECO:0007669"/>
    <property type="project" value="UniProtKB-SubCell"/>
</dbReference>
<dbReference type="GO" id="GO:0003677">
    <property type="term" value="F:DNA binding"/>
    <property type="evidence" value="ECO:0007669"/>
    <property type="project" value="UniProtKB-KW"/>
</dbReference>
<dbReference type="GO" id="GO:0030261">
    <property type="term" value="P:chromosome condensation"/>
    <property type="evidence" value="ECO:0007669"/>
    <property type="project" value="UniProtKB-KW"/>
</dbReference>
<dbReference type="GO" id="GO:0006997">
    <property type="term" value="P:nucleus organization"/>
    <property type="evidence" value="ECO:0007669"/>
    <property type="project" value="TreeGrafter"/>
</dbReference>
<dbReference type="GO" id="GO:0007286">
    <property type="term" value="P:spermatid development"/>
    <property type="evidence" value="ECO:0007669"/>
    <property type="project" value="InterPro"/>
</dbReference>
<dbReference type="GO" id="GO:0007283">
    <property type="term" value="P:spermatogenesis"/>
    <property type="evidence" value="ECO:0000250"/>
    <property type="project" value="UniProtKB"/>
</dbReference>
<dbReference type="InterPro" id="IPR000492">
    <property type="entry name" value="PRM2"/>
</dbReference>
<dbReference type="PANTHER" id="PTHR21341">
    <property type="entry name" value="PROTAMINE-2"/>
    <property type="match status" value="1"/>
</dbReference>
<dbReference type="PANTHER" id="PTHR21341:SF2">
    <property type="entry name" value="PROTAMINE-2"/>
    <property type="match status" value="1"/>
</dbReference>
<dbReference type="Pfam" id="PF00841">
    <property type="entry name" value="Protamine_P2"/>
    <property type="match status" value="1"/>
</dbReference>
<evidence type="ECO:0000250" key="1">
    <source>
        <dbReference type="UniProtKB" id="P07978"/>
    </source>
</evidence>
<evidence type="ECO:0000250" key="2">
    <source>
        <dbReference type="UniProtKB" id="P11248"/>
    </source>
</evidence>
<evidence type="ECO:0000256" key="3">
    <source>
        <dbReference type="SAM" id="MobiDB-lite"/>
    </source>
</evidence>
<evidence type="ECO:0000305" key="4"/>
<organism>
    <name type="scientific">Semnopithecus entellus</name>
    <name type="common">Northern plains gray langur</name>
    <name type="synonym">Presbytis entellus</name>
    <dbReference type="NCBI Taxonomy" id="88029"/>
    <lineage>
        <taxon>Eukaryota</taxon>
        <taxon>Metazoa</taxon>
        <taxon>Chordata</taxon>
        <taxon>Craniata</taxon>
        <taxon>Vertebrata</taxon>
        <taxon>Euteleostomi</taxon>
        <taxon>Mammalia</taxon>
        <taxon>Eutheria</taxon>
        <taxon>Euarchontoglires</taxon>
        <taxon>Primates</taxon>
        <taxon>Haplorrhini</taxon>
        <taxon>Catarrhini</taxon>
        <taxon>Cercopithecidae</taxon>
        <taxon>Colobinae</taxon>
        <taxon>Semnopithecus</taxon>
    </lineage>
</organism>
<comment type="function">
    <text evidence="1">Protamines substitute for histones in the chromatin of sperm during the haploid phase of spermatogenesis. They compact sperm DNA into a highly condensed, stable and inactive complex.</text>
</comment>
<comment type="subunit">
    <text evidence="1">Interacts with TDRP.</text>
</comment>
<comment type="subcellular location">
    <subcellularLocation>
        <location evidence="1">Nucleus</location>
    </subcellularLocation>
    <subcellularLocation>
        <location evidence="1">Chromosome</location>
    </subcellularLocation>
</comment>
<comment type="tissue specificity">
    <text>Testis.</text>
</comment>
<comment type="PTM">
    <text evidence="1">Proteolytic processing into mature chains is required for histone eviction during spermatogenesis. Transition proteins (TNP1 and TNP2) are required for processing.</text>
</comment>
<comment type="similarity">
    <text evidence="4">Belongs to the protamine P2 family.</text>
</comment>
<keyword id="KW-0158">Chromosome</keyword>
<keyword id="KW-0217">Developmental protein</keyword>
<keyword id="KW-0221">Differentiation</keyword>
<keyword id="KW-0226">DNA condensation</keyword>
<keyword id="KW-0238">DNA-binding</keyword>
<keyword id="KW-0544">Nucleosome core</keyword>
<keyword id="KW-0539">Nucleus</keyword>
<keyword id="KW-0597">Phosphoprotein</keyword>
<keyword id="KW-0744">Spermatogenesis</keyword>
<reference key="1">
    <citation type="submission" date="1999-10" db="EMBL/GenBank/DDBJ databases">
        <title>Positive Darwinian selection on the lineage leading to humans.</title>
        <authorList>
            <person name="Karanth P.K."/>
            <person name="Stewart C.-B."/>
            <person name="Holt R.A."/>
            <person name="de Koning J."/>
            <person name="Messier W."/>
        </authorList>
    </citation>
    <scope>NUCLEOTIDE SEQUENCE [GENOMIC DNA]</scope>
</reference>
<gene>
    <name type="primary">PRM2</name>
</gene>